<comment type="function">
    <text evidence="1 3 5">One of the components of the core complex of photosystem II (PSII). It binds chlorophyll and helps catalyze the primary light-induced photochemical processes of PSII. PSII is a light-driven water:plastoquinone oxidoreductase, using light energy to abstract electrons from H(2)O, generating O(2) and a proton gradient subsequently used for ATP formation.</text>
</comment>
<comment type="cofactor">
    <text evidence="1 2 3 4 5">Binds multiple chlorophylls and provides some of the ligands for the Ca-4Mn-5O cluster of the oxygen-evolving complex. It may also provide a ligand for a Cl- that is required for oxygen evolution. PSII binds additional chlorophylls, carotenoids and specific lipids.</text>
</comment>
<comment type="subunit">
    <text evidence="1 2 3 4 5">PSII is composed of 1 copy each of membrane proteins PsbA, PsbB, PsbC, PsbD, PsbE, PsbF, PsbH, PsbI, PsbJ, PsbK, PsbL, PsbM, PsbT, PsbX, PsbY, PsbZ, Psb30/Ycf12, peripheral proteins PsbO, CyanoQ (PsbQ), PsbU, PsbV and a large number of cofactors. It forms dimeric complexes.</text>
</comment>
<comment type="subcellular location">
    <subcellularLocation>
        <location evidence="1 2 3 4 5">Cellular thylakoid membrane</location>
        <topology evidence="1 2 3 4 5">Multi-pass membrane protein</topology>
    </subcellularLocation>
</comment>
<comment type="similarity">
    <text evidence="1">Belongs to the PsbB/PsbC family. PsbC subfamily.</text>
</comment>
<protein>
    <recommendedName>
        <fullName evidence="1">Photosystem II CP43 reaction center protein</fullName>
    </recommendedName>
    <alternativeName>
        <fullName evidence="1">PSII 43 kDa protein</fullName>
    </alternativeName>
    <alternativeName>
        <fullName evidence="1">Protein CP-43</fullName>
    </alternativeName>
</protein>
<proteinExistence type="evidence at protein level"/>
<accession>D0VWR7</accession>
<feature type="chain" id="PRO_0000422601" description="Photosystem II CP43 reaction center protein">
    <location>
        <begin position="1" status="less than"/>
        <end position="451" status="greater than"/>
    </location>
</feature>
<feature type="topological domain" description="Cytoplasmic" evidence="4">
    <location>
        <begin position="1"/>
        <end position="46"/>
    </location>
</feature>
<feature type="transmembrane region" description="Helical" evidence="1 4 7">
    <location>
        <begin position="47"/>
        <end position="71"/>
    </location>
</feature>
<feature type="topological domain" description="Lumenal" evidence="4">
    <location>
        <begin position="72"/>
        <end position="111"/>
    </location>
</feature>
<feature type="transmembrane region" description="Helical" evidence="1 4 7">
    <location>
        <begin position="112"/>
        <end position="133"/>
    </location>
</feature>
<feature type="topological domain" description="Cytoplasmic" evidence="4">
    <location>
        <begin position="134"/>
        <end position="155"/>
    </location>
</feature>
<feature type="transmembrane region" description="Helical" evidence="1 4 7">
    <location>
        <begin position="156"/>
        <end position="178"/>
    </location>
</feature>
<feature type="topological domain" description="Lumenal" evidence="4">
    <location>
        <begin position="179"/>
        <end position="232"/>
    </location>
</feature>
<feature type="transmembrane region" description="Helical" evidence="1 4 7">
    <location>
        <begin position="233"/>
        <end position="253"/>
    </location>
</feature>
<feature type="topological domain" description="Cytoplasmic" evidence="4">
    <location>
        <begin position="254"/>
        <end position="268"/>
    </location>
</feature>
<feature type="transmembrane region" description="Helical" evidence="1 4 7">
    <location>
        <begin position="269"/>
        <end position="290"/>
    </location>
</feature>
<feature type="topological domain" description="Lumenal" evidence="4">
    <location>
        <begin position="291"/>
        <end position="424"/>
    </location>
</feature>
<feature type="transmembrane region" description="Helical" evidence="1 4 7">
    <location>
        <begin position="425"/>
        <end position="449"/>
    </location>
</feature>
<feature type="topological domain" description="Cytoplasmic" evidence="4">
    <location>
        <begin position="450"/>
        <end position="451"/>
    </location>
</feature>
<feature type="binding site" description="axial binding residue" evidence="4">
    <location>
        <position position="13"/>
    </location>
    <ligand>
        <name>chlorophyll a</name>
        <dbReference type="ChEBI" id="CHEBI:58416"/>
        <label>2</label>
    </ligand>
    <ligandPart>
        <name>Mg</name>
        <dbReference type="ChEBI" id="CHEBI:25107"/>
    </ligandPart>
</feature>
<feature type="binding site" description="axial binding residue" evidence="4">
    <location>
        <position position="27"/>
    </location>
    <ligand>
        <name>chlorophyll a</name>
        <dbReference type="ChEBI" id="CHEBI:58416"/>
        <label>3</label>
    </ligand>
    <ligandPart>
        <name>Mg</name>
        <dbReference type="ChEBI" id="CHEBI:25107"/>
    </ligandPart>
</feature>
<feature type="binding site" description="axial binding residue" evidence="4">
    <location>
        <position position="30"/>
    </location>
    <ligand>
        <name>chlorophyll a</name>
        <dbReference type="ChEBI" id="CHEBI:58416"/>
        <label>4</label>
    </ligand>
    <ligandPart>
        <name>Mg</name>
        <dbReference type="ChEBI" id="CHEBI:25107"/>
    </ligandPart>
</feature>
<feature type="binding site" description="axial binding residue" evidence="4">
    <location>
        <position position="92"/>
    </location>
    <ligand>
        <name>chlorophyll a</name>
        <dbReference type="ChEBI" id="CHEBI:58416"/>
        <label>8</label>
    </ligand>
    <ligandPart>
        <name>Mg</name>
        <dbReference type="ChEBI" id="CHEBI:25107"/>
    </ligandPart>
</feature>
<feature type="binding site" description="axial binding residue" evidence="4">
    <location>
        <position position="106"/>
    </location>
    <ligand>
        <name>chlorophyll a</name>
        <dbReference type="ChEBI" id="CHEBI:58416"/>
        <label>10</label>
    </ligand>
    <ligandPart>
        <name>Mg</name>
        <dbReference type="ChEBI" id="CHEBI:25107"/>
    </ligandPart>
</feature>
<feature type="binding site" description="axial binding residue" evidence="4">
    <location>
        <position position="138"/>
    </location>
    <ligand>
        <name>chlorophyll a</name>
        <dbReference type="ChEBI" id="CHEBI:58416"/>
        <label>5</label>
    </ligand>
    <ligandPart>
        <name>Mg</name>
        <dbReference type="ChEBI" id="CHEBI:25107"/>
    </ligandPart>
</feature>
<feature type="binding site" description="axial binding residue" evidence="4">
    <location>
        <position position="211"/>
    </location>
    <ligand>
        <name>chlorophyll a</name>
        <dbReference type="ChEBI" id="CHEBI:58416"/>
        <label>9</label>
    </ligand>
    <ligandPart>
        <name>Mg</name>
        <dbReference type="ChEBI" id="CHEBI:25107"/>
    </ligandPart>
</feature>
<feature type="binding site" description="axial binding residue" evidence="4">
    <location>
        <position position="225"/>
    </location>
    <ligand>
        <name>chlorophyll a</name>
        <dbReference type="ChEBI" id="CHEBI:58416"/>
        <label>12</label>
    </ligand>
    <ligandPart>
        <name>Mg</name>
        <dbReference type="ChEBI" id="CHEBI:25107"/>
    </ligandPart>
</feature>
<feature type="binding site" evidence="1 4 5 6">
    <location>
        <position position="345"/>
    </location>
    <ligand>
        <name>[CaMn4O5] cluster</name>
        <dbReference type="ChEBI" id="CHEBI:189552"/>
    </ligand>
</feature>
<feature type="binding site" description="axial binding residue" evidence="4">
    <location>
        <position position="404"/>
    </location>
    <ligand>
        <name>chlorophyll a</name>
        <dbReference type="ChEBI" id="CHEBI:58416"/>
        <label>7</label>
    </ligand>
    <ligandPart>
        <name>Mg</name>
        <dbReference type="ChEBI" id="CHEBI:25107"/>
    </ligandPart>
</feature>
<feature type="binding site" description="axial binding residue" evidence="4">
    <location>
        <position position="415"/>
    </location>
    <ligand>
        <name>chlorophyll a</name>
        <dbReference type="ChEBI" id="CHEBI:58416"/>
        <label>13</label>
    </ligand>
    <ligandPart>
        <name>Mg</name>
        <dbReference type="ChEBI" id="CHEBI:25107"/>
    </ligandPart>
</feature>
<feature type="binding site" description="axial binding residue" evidence="4">
    <location>
        <position position="418"/>
    </location>
    <ligand>
        <name>chlorophyll a</name>
        <dbReference type="ChEBI" id="CHEBI:58416"/>
        <label>1</label>
    </ligand>
    <ligandPart>
        <name>Mg</name>
        <dbReference type="ChEBI" id="CHEBI:25107"/>
    </ligandPart>
</feature>
<feature type="non-terminal residue">
    <location>
        <position position="1"/>
    </location>
</feature>
<feature type="non-terminal residue">
    <location>
        <position position="451"/>
    </location>
</feature>
<feature type="helix" evidence="8">
    <location>
        <begin position="6"/>
        <end position="9"/>
    </location>
</feature>
<feature type="helix" evidence="8">
    <location>
        <begin position="13"/>
        <end position="20"/>
    </location>
</feature>
<feature type="helix" evidence="8">
    <location>
        <begin position="24"/>
        <end position="52"/>
    </location>
</feature>
<feature type="strand" evidence="10">
    <location>
        <begin position="55"/>
        <end position="57"/>
    </location>
</feature>
<feature type="helix" evidence="8">
    <location>
        <begin position="59"/>
        <end position="61"/>
    </location>
</feature>
<feature type="helix" evidence="8">
    <location>
        <begin position="66"/>
        <end position="72"/>
    </location>
</feature>
<feature type="strand" evidence="8">
    <location>
        <begin position="75"/>
        <end position="77"/>
    </location>
</feature>
<feature type="helix" evidence="8">
    <location>
        <begin position="79"/>
        <end position="81"/>
    </location>
</feature>
<feature type="helix" evidence="8">
    <location>
        <begin position="87"/>
        <end position="112"/>
    </location>
</feature>
<feature type="turn" evidence="8">
    <location>
        <begin position="119"/>
        <end position="121"/>
    </location>
</feature>
<feature type="turn" evidence="8">
    <location>
        <begin position="123"/>
        <end position="125"/>
    </location>
</feature>
<feature type="helix" evidence="8">
    <location>
        <begin position="132"/>
        <end position="159"/>
    </location>
</feature>
<feature type="strand" evidence="8">
    <location>
        <begin position="163"/>
        <end position="165"/>
    </location>
</feature>
<feature type="turn" evidence="11">
    <location>
        <begin position="169"/>
        <end position="171"/>
    </location>
</feature>
<feature type="strand" evidence="8">
    <location>
        <begin position="173"/>
        <end position="175"/>
    </location>
</feature>
<feature type="helix" evidence="8">
    <location>
        <begin position="184"/>
        <end position="191"/>
    </location>
</feature>
<feature type="turn" evidence="8">
    <location>
        <begin position="197"/>
        <end position="199"/>
    </location>
</feature>
<feature type="helix" evidence="8">
    <location>
        <begin position="201"/>
        <end position="204"/>
    </location>
</feature>
<feature type="helix" evidence="8">
    <location>
        <begin position="208"/>
        <end position="231"/>
    </location>
</feature>
<feature type="helix" evidence="8">
    <location>
        <begin position="236"/>
        <end position="241"/>
    </location>
</feature>
<feature type="helix" evidence="8">
    <location>
        <begin position="246"/>
        <end position="270"/>
    </location>
</feature>
<feature type="turn" evidence="8">
    <location>
        <begin position="273"/>
        <end position="276"/>
    </location>
</feature>
<feature type="helix" evidence="8">
    <location>
        <begin position="277"/>
        <end position="280"/>
    </location>
</feature>
<feature type="helix" evidence="8">
    <location>
        <begin position="284"/>
        <end position="301"/>
    </location>
</feature>
<feature type="turn" evidence="8">
    <location>
        <begin position="306"/>
        <end position="308"/>
    </location>
</feature>
<feature type="strand" evidence="8">
    <location>
        <begin position="314"/>
        <end position="321"/>
    </location>
</feature>
<feature type="strand" evidence="8">
    <location>
        <begin position="327"/>
        <end position="329"/>
    </location>
</feature>
<feature type="helix" evidence="8">
    <location>
        <begin position="331"/>
        <end position="336"/>
    </location>
</feature>
<feature type="turn" evidence="8">
    <location>
        <begin position="342"/>
        <end position="344"/>
    </location>
</feature>
<feature type="helix" evidence="8">
    <location>
        <begin position="345"/>
        <end position="347"/>
    </location>
</feature>
<feature type="helix" evidence="8">
    <location>
        <begin position="355"/>
        <end position="360"/>
    </location>
</feature>
<feature type="helix" evidence="8">
    <location>
        <begin position="364"/>
        <end position="374"/>
    </location>
</feature>
<feature type="strand" evidence="8">
    <location>
        <begin position="385"/>
        <end position="388"/>
    </location>
</feature>
<feature type="helix" evidence="8">
    <location>
        <begin position="400"/>
        <end position="430"/>
    </location>
</feature>
<feature type="helix" evidence="9">
    <location>
        <begin position="439"/>
        <end position="441"/>
    </location>
</feature>
<feature type="helix" evidence="8">
    <location>
        <begin position="443"/>
        <end position="446"/>
    </location>
</feature>
<name>PSBC_THEVL</name>
<evidence type="ECO:0000255" key="1">
    <source>
        <dbReference type="HAMAP-Rule" id="MF_01496"/>
    </source>
</evidence>
<evidence type="ECO:0000269" key="2">
    <source>
    </source>
</evidence>
<evidence type="ECO:0000269" key="3">
    <source>
    </source>
</evidence>
<evidence type="ECO:0000269" key="4">
    <source>
    </source>
</evidence>
<evidence type="ECO:0000269" key="5">
    <source>
    </source>
</evidence>
<evidence type="ECO:0000303" key="6">
    <source>
    </source>
</evidence>
<evidence type="ECO:0000312" key="7">
    <source>
        <dbReference type="PDB" id="3WU2"/>
    </source>
</evidence>
<evidence type="ECO:0007829" key="8">
    <source>
        <dbReference type="PDB" id="5B66"/>
    </source>
</evidence>
<evidence type="ECO:0007829" key="9">
    <source>
        <dbReference type="PDB" id="5V2C"/>
    </source>
</evidence>
<evidence type="ECO:0007829" key="10">
    <source>
        <dbReference type="PDB" id="7EDA"/>
    </source>
</evidence>
<evidence type="ECO:0007829" key="11">
    <source>
        <dbReference type="PDB" id="8IR5"/>
    </source>
</evidence>
<sequence length="451" mass="49165">ATNRDQESSGFAWWAGNARLINLSGKLLGAHVAHAGLIVFWAGAMTLFELAHFIPEKPMYEQGLILIPHIATLGWGVGPGGEVVDTFPFFVVGVVHLISSAVLGFGGVYHAIRGPETLEEYSSFFGYDWKDKNKMTTILGFHLIVLGIGALLLVAKAMFFGGLYDTWAPGGGDVRVITNPTLDPRVIFGYLLKSPFGGEGWIVSVNNLEDVVGGHIWIGLICIAGGIWHILTTPFGWARRAFIWSGEAYLSYSLGALSMMGFIATCFVWFNNTVYPSEFYGPTGPEASQAQAMTFLIRDQKLGANVGSAQGPTGLGKYLMRSPTGEIIFGGETMRFWDFRGPWLEPLRGPNGLDLNKIKNDIQPWQERRAAEYMTHAPLGSLNSVGGVATEINSVNFVSPRSWLATSHFVLAFFFLVGHLWHAGRARAAAAGFEKGIDRESEPVLSMPSLD</sequence>
<gene>
    <name evidence="1" type="primary">psbC</name>
</gene>
<keyword id="KW-0002">3D-structure</keyword>
<keyword id="KW-0148">Chlorophyll</keyword>
<keyword id="KW-0157">Chromophore</keyword>
<keyword id="KW-0464">Manganese</keyword>
<keyword id="KW-0472">Membrane</keyword>
<keyword id="KW-0479">Metal-binding</keyword>
<keyword id="KW-0602">Photosynthesis</keyword>
<keyword id="KW-0604">Photosystem II</keyword>
<keyword id="KW-0793">Thylakoid</keyword>
<keyword id="KW-0812">Transmembrane</keyword>
<keyword id="KW-1133">Transmembrane helix</keyword>
<reference key="1">
    <citation type="journal article" date="2003" name="Proc. Natl. Acad. Sci. U.S.A.">
        <title>Crystal structure of oxygen-evolving photosystem II from Thermosynechococcus vulcanus at 3.7-A resolution.</title>
        <authorList>
            <person name="Kamiya N."/>
            <person name="Shen J.-R."/>
        </authorList>
    </citation>
    <scope>X-RAY CRYSTALLOGRAPHY (3.7 ANGSTROMS) OF 11-451 IN PHOTOSYSTEM II</scope>
    <scope>COFACTOR</scope>
    <scope>SUBUNIT</scope>
    <scope>SUBCELLULAR LOCATION</scope>
</reference>
<reference key="2">
    <citation type="journal article" date="2009" name="Proc. Natl. Acad. Sci. U.S.A.">
        <title>Location of chloride and its possible functions in oxygen-evolving photosystem II revealed by X-ray crystallography.</title>
        <authorList>
            <person name="Kawakami K."/>
            <person name="Umena Y."/>
            <person name="Kamiya N."/>
            <person name="Shen J.R."/>
        </authorList>
    </citation>
    <scope>X-RAY CRYSTALLOGRAPHY (3.70 ANGSTROMS) OF 5-451 IN COMPLEX WITH CA-MN4-O5 CLUSTER AND CHLOROPHYLL A IN PHOTOSYSTEM II</scope>
    <scope>FUNCTION</scope>
    <scope>COFACTOR</scope>
    <scope>SUBUNIT</scope>
    <scope>SUBCELLULAR LOCATION</scope>
    <scope>POSSIBLE CL(-) LIGAND</scope>
</reference>
<reference key="3">
    <citation type="journal article" date="2011" name="Nature">
        <title>Crystal structure of oxygen-evolving photosystem II at a resolution of 1.9 A.</title>
        <authorList>
            <person name="Umena Y."/>
            <person name="Kawakami K."/>
            <person name="Shen J.R."/>
            <person name="Kamiya N."/>
        </authorList>
    </citation>
    <scope>X-RAY CRYSTALLOGRAPHY (1.90 ANGSTROMS) OF 5-451 IN COMPLEX WITH CA-MN4-O5 CLUSTER AND CHLOROPHYLL A IN PHOTOSYSTEM II</scope>
    <scope>COFACTOR</scope>
    <scope>SUBUNIT</scope>
    <scope>SUBCELLULAR LOCATION</scope>
    <scope>TOPOLOGY</scope>
</reference>
<reference key="4">
    <citation type="journal article" date="2013" name="Proc. Natl. Acad. Sci. U.S.A.">
        <title>Structure of Sr-substituted photosystem II at 2.1 A resolution and its implications in the mechanism of water oxidation.</title>
        <authorList>
            <person name="Koua F.H."/>
            <person name="Umena Y."/>
            <person name="Kawakami K."/>
            <person name="Shen J.R."/>
        </authorList>
    </citation>
    <scope>X-RAY CRYSTALLOGRAPHY (2.1 ANGSTROMS) IN PHOTOSYSTEM II</scope>
    <scope>FUNCTION</scope>
    <scope>COFACTOR</scope>
    <scope>SUBUNIT</scope>
    <scope>SUBCELLULAR LOCATION</scope>
</reference>
<dbReference type="PDB" id="1IZL">
    <property type="method" value="X-ray"/>
    <property type="resolution" value="3.70 A"/>
    <property type="chains" value="C/M=11-451"/>
</dbReference>
<dbReference type="PDB" id="3A0B">
    <property type="method" value="X-ray"/>
    <property type="resolution" value="3.70 A"/>
    <property type="chains" value="C/c=5-451"/>
</dbReference>
<dbReference type="PDB" id="3A0H">
    <property type="method" value="X-ray"/>
    <property type="resolution" value="4.00 A"/>
    <property type="chains" value="C/c=5-451"/>
</dbReference>
<dbReference type="PDB" id="3WU2">
    <property type="method" value="X-ray"/>
    <property type="resolution" value="1.90 A"/>
    <property type="chains" value="C/c=1-451"/>
</dbReference>
<dbReference type="PDB" id="4IL6">
    <property type="method" value="X-ray"/>
    <property type="resolution" value="2.10 A"/>
    <property type="chains" value="C/c=1-451"/>
</dbReference>
<dbReference type="PDB" id="4UB6">
    <property type="method" value="X-ray"/>
    <property type="resolution" value="1.95 A"/>
    <property type="chains" value="C/c=1-451"/>
</dbReference>
<dbReference type="PDB" id="4UB8">
    <property type="method" value="X-ray"/>
    <property type="resolution" value="1.95 A"/>
    <property type="chains" value="C/c=1-451"/>
</dbReference>
<dbReference type="PDB" id="5B5E">
    <property type="method" value="X-ray"/>
    <property type="resolution" value="1.87 A"/>
    <property type="chains" value="C/c=1-451"/>
</dbReference>
<dbReference type="PDB" id="5B66">
    <property type="method" value="X-ray"/>
    <property type="resolution" value="1.85 A"/>
    <property type="chains" value="C/c=1-451"/>
</dbReference>
<dbReference type="PDB" id="5GTH">
    <property type="method" value="X-ray"/>
    <property type="resolution" value="2.50 A"/>
    <property type="chains" value="C/c=1-451"/>
</dbReference>
<dbReference type="PDB" id="5GTI">
    <property type="method" value="X-ray"/>
    <property type="resolution" value="2.50 A"/>
    <property type="chains" value="C/c=1-451"/>
</dbReference>
<dbReference type="PDB" id="5V2C">
    <property type="method" value="X-ray"/>
    <property type="resolution" value="1.90 A"/>
    <property type="chains" value="C/c=1-451"/>
</dbReference>
<dbReference type="PDB" id="5WS5">
    <property type="method" value="X-ray"/>
    <property type="resolution" value="2.35 A"/>
    <property type="chains" value="C/c=1-451"/>
</dbReference>
<dbReference type="PDB" id="5WS6">
    <property type="method" value="X-ray"/>
    <property type="resolution" value="2.35 A"/>
    <property type="chains" value="C/c=1-451"/>
</dbReference>
<dbReference type="PDB" id="6JLJ">
    <property type="method" value="X-ray"/>
    <property type="resolution" value="2.15 A"/>
    <property type="chains" value="C/c=1-451"/>
</dbReference>
<dbReference type="PDB" id="6JLK">
    <property type="method" value="X-ray"/>
    <property type="resolution" value="2.15 A"/>
    <property type="chains" value="C/c=1-451"/>
</dbReference>
<dbReference type="PDB" id="6JLL">
    <property type="method" value="X-ray"/>
    <property type="resolution" value="2.15 A"/>
    <property type="chains" value="C/c=1-451"/>
</dbReference>
<dbReference type="PDB" id="6JLM">
    <property type="method" value="X-ray"/>
    <property type="resolution" value="2.35 A"/>
    <property type="chains" value="C/c=1-451"/>
</dbReference>
<dbReference type="PDB" id="6JLN">
    <property type="method" value="X-ray"/>
    <property type="resolution" value="2.40 A"/>
    <property type="chains" value="C/c=1-451"/>
</dbReference>
<dbReference type="PDB" id="6JLO">
    <property type="method" value="X-ray"/>
    <property type="resolution" value="2.40 A"/>
    <property type="chains" value="C/c=1-451"/>
</dbReference>
<dbReference type="PDB" id="6JLP">
    <property type="method" value="X-ray"/>
    <property type="resolution" value="2.50 A"/>
    <property type="chains" value="C/c=1-451"/>
</dbReference>
<dbReference type="PDB" id="7CJI">
    <property type="method" value="X-ray"/>
    <property type="resolution" value="2.35 A"/>
    <property type="chains" value="C/c=1-451"/>
</dbReference>
<dbReference type="PDB" id="7CJJ">
    <property type="method" value="X-ray"/>
    <property type="resolution" value="2.40 A"/>
    <property type="chains" value="C/c=1-451"/>
</dbReference>
<dbReference type="PDB" id="7COU">
    <property type="method" value="X-ray"/>
    <property type="resolution" value="2.25 A"/>
    <property type="chains" value="C/c=1-451"/>
</dbReference>
<dbReference type="PDB" id="7CZL">
    <property type="method" value="EM"/>
    <property type="resolution" value="3.78 A"/>
    <property type="chains" value="C/c=5-450"/>
</dbReference>
<dbReference type="PDB" id="7D1T">
    <property type="method" value="EM"/>
    <property type="resolution" value="1.95 A"/>
    <property type="chains" value="C/c=1-451"/>
</dbReference>
<dbReference type="PDB" id="7D1U">
    <property type="method" value="EM"/>
    <property type="resolution" value="2.08 A"/>
    <property type="chains" value="C/c=1-451"/>
</dbReference>
<dbReference type="PDB" id="7DXH">
    <property type="method" value="EM"/>
    <property type="resolution" value="3.14 A"/>
    <property type="chains" value="c=1-451"/>
</dbReference>
<dbReference type="PDB" id="7EDA">
    <property type="method" value="EM"/>
    <property type="resolution" value="2.78 A"/>
    <property type="chains" value="C=1-451"/>
</dbReference>
<dbReference type="PDB" id="8GN0">
    <property type="method" value="X-ray"/>
    <property type="resolution" value="2.15 A"/>
    <property type="chains" value="C/c=1-451"/>
</dbReference>
<dbReference type="PDB" id="8GN1">
    <property type="method" value="X-ray"/>
    <property type="resolution" value="2.10 A"/>
    <property type="chains" value="C/c=1-451"/>
</dbReference>
<dbReference type="PDB" id="8GN2">
    <property type="method" value="X-ray"/>
    <property type="resolution" value="1.95 A"/>
    <property type="chains" value="C/c=1-451"/>
</dbReference>
<dbReference type="PDB" id="8IR5">
    <property type="method" value="X-ray"/>
    <property type="resolution" value="2.15 A"/>
    <property type="chains" value="C/c=1-451"/>
</dbReference>
<dbReference type="PDB" id="8IR6">
    <property type="method" value="X-ray"/>
    <property type="resolution" value="2.20 A"/>
    <property type="chains" value="C/c=1-451"/>
</dbReference>
<dbReference type="PDB" id="8IR7">
    <property type="method" value="X-ray"/>
    <property type="resolution" value="2.25 A"/>
    <property type="chains" value="C/c=1-451"/>
</dbReference>
<dbReference type="PDB" id="8IR8">
    <property type="method" value="X-ray"/>
    <property type="resolution" value="2.25 A"/>
    <property type="chains" value="C/c=1-451"/>
</dbReference>
<dbReference type="PDB" id="8IR9">
    <property type="method" value="X-ray"/>
    <property type="resolution" value="2.20 A"/>
    <property type="chains" value="C/c=1-451"/>
</dbReference>
<dbReference type="PDB" id="8IRA">
    <property type="method" value="X-ray"/>
    <property type="resolution" value="2.20 A"/>
    <property type="chains" value="C/c=1-451"/>
</dbReference>
<dbReference type="PDB" id="8IRB">
    <property type="method" value="X-ray"/>
    <property type="resolution" value="2.30 A"/>
    <property type="chains" value="C/c=1-451"/>
</dbReference>
<dbReference type="PDB" id="8IRC">
    <property type="method" value="X-ray"/>
    <property type="resolution" value="2.25 A"/>
    <property type="chains" value="C/c=1-451"/>
</dbReference>
<dbReference type="PDB" id="8IRD">
    <property type="method" value="X-ray"/>
    <property type="resolution" value="2.30 A"/>
    <property type="chains" value="C/c=1-451"/>
</dbReference>
<dbReference type="PDB" id="8IRE">
    <property type="method" value="X-ray"/>
    <property type="resolution" value="2.25 A"/>
    <property type="chains" value="C/c=1-451"/>
</dbReference>
<dbReference type="PDB" id="8IRF">
    <property type="method" value="X-ray"/>
    <property type="resolution" value="2.25 A"/>
    <property type="chains" value="C/c=1-451"/>
</dbReference>
<dbReference type="PDB" id="8IRG">
    <property type="method" value="X-ray"/>
    <property type="resolution" value="2.30 A"/>
    <property type="chains" value="C/c=1-451"/>
</dbReference>
<dbReference type="PDB" id="8IRH">
    <property type="method" value="X-ray"/>
    <property type="resolution" value="2.25 A"/>
    <property type="chains" value="C/c=1-451"/>
</dbReference>
<dbReference type="PDB" id="8IRI">
    <property type="method" value="X-ray"/>
    <property type="resolution" value="2.25 A"/>
    <property type="chains" value="C/c=1-451"/>
</dbReference>
<dbReference type="PDBsum" id="1IZL"/>
<dbReference type="PDBsum" id="3A0B"/>
<dbReference type="PDBsum" id="3A0H"/>
<dbReference type="PDBsum" id="3WU2"/>
<dbReference type="PDBsum" id="4IL6"/>
<dbReference type="PDBsum" id="4UB6"/>
<dbReference type="PDBsum" id="4UB8"/>
<dbReference type="PDBsum" id="5B5E"/>
<dbReference type="PDBsum" id="5B66"/>
<dbReference type="PDBsum" id="5GTH"/>
<dbReference type="PDBsum" id="5GTI"/>
<dbReference type="PDBsum" id="5V2C"/>
<dbReference type="PDBsum" id="5WS5"/>
<dbReference type="PDBsum" id="5WS6"/>
<dbReference type="PDBsum" id="6JLJ"/>
<dbReference type="PDBsum" id="6JLK"/>
<dbReference type="PDBsum" id="6JLL"/>
<dbReference type="PDBsum" id="6JLM"/>
<dbReference type="PDBsum" id="6JLN"/>
<dbReference type="PDBsum" id="6JLO"/>
<dbReference type="PDBsum" id="6JLP"/>
<dbReference type="PDBsum" id="7CJI"/>
<dbReference type="PDBsum" id="7CJJ"/>
<dbReference type="PDBsum" id="7COU"/>
<dbReference type="PDBsum" id="7CZL"/>
<dbReference type="PDBsum" id="7D1T"/>
<dbReference type="PDBsum" id="7D1U"/>
<dbReference type="PDBsum" id="7DXH"/>
<dbReference type="PDBsum" id="7EDA"/>
<dbReference type="PDBsum" id="8GN0"/>
<dbReference type="PDBsum" id="8GN1"/>
<dbReference type="PDBsum" id="8GN2"/>
<dbReference type="PDBsum" id="8IR5"/>
<dbReference type="PDBsum" id="8IR6"/>
<dbReference type="PDBsum" id="8IR7"/>
<dbReference type="PDBsum" id="8IR8"/>
<dbReference type="PDBsum" id="8IR9"/>
<dbReference type="PDBsum" id="8IRA"/>
<dbReference type="PDBsum" id="8IRB"/>
<dbReference type="PDBsum" id="8IRC"/>
<dbReference type="PDBsum" id="8IRD"/>
<dbReference type="PDBsum" id="8IRE"/>
<dbReference type="PDBsum" id="8IRF"/>
<dbReference type="PDBsum" id="8IRG"/>
<dbReference type="PDBsum" id="8IRH"/>
<dbReference type="PDBsum" id="8IRI"/>
<dbReference type="EMDB" id="EMD-30511"/>
<dbReference type="EMDB" id="EMD-30547"/>
<dbReference type="EMDB" id="EMD-30548"/>
<dbReference type="EMDB" id="EMD-30909"/>
<dbReference type="EMDB" id="EMD-31062"/>
<dbReference type="EMDB" id="EMD-9908"/>
<dbReference type="SMR" id="D0VWR7"/>
<dbReference type="DIP" id="DIP-61465N"/>
<dbReference type="IntAct" id="D0VWR7">
    <property type="interactions" value="1"/>
</dbReference>
<dbReference type="EvolutionaryTrace" id="D0VWR7"/>
<dbReference type="GO" id="GO:0009523">
    <property type="term" value="C:photosystem II"/>
    <property type="evidence" value="ECO:0007669"/>
    <property type="project" value="UniProtKB-KW"/>
</dbReference>
<dbReference type="GO" id="GO:0031676">
    <property type="term" value="C:plasma membrane-derived thylakoid membrane"/>
    <property type="evidence" value="ECO:0007669"/>
    <property type="project" value="UniProtKB-SubCell"/>
</dbReference>
<dbReference type="GO" id="GO:0016168">
    <property type="term" value="F:chlorophyll binding"/>
    <property type="evidence" value="ECO:0007669"/>
    <property type="project" value="UniProtKB-KW"/>
</dbReference>
<dbReference type="GO" id="GO:0045156">
    <property type="term" value="F:electron transporter, transferring electrons within the cyclic electron transport pathway of photosynthesis activity"/>
    <property type="evidence" value="ECO:0007669"/>
    <property type="project" value="InterPro"/>
</dbReference>
<dbReference type="GO" id="GO:0046872">
    <property type="term" value="F:metal ion binding"/>
    <property type="evidence" value="ECO:0007669"/>
    <property type="project" value="UniProtKB-KW"/>
</dbReference>
<dbReference type="GO" id="GO:0009772">
    <property type="term" value="P:photosynthetic electron transport in photosystem II"/>
    <property type="evidence" value="ECO:0007669"/>
    <property type="project" value="InterPro"/>
</dbReference>
<dbReference type="FunFam" id="1.10.10.670:FF:000001">
    <property type="entry name" value="Photosystem II CP43 reaction center protein"/>
    <property type="match status" value="1"/>
</dbReference>
<dbReference type="Gene3D" id="1.10.10.670">
    <property type="entry name" value="photosystem ii from thermosynechococcus elongatus"/>
    <property type="match status" value="1"/>
</dbReference>
<dbReference type="HAMAP" id="MF_01496">
    <property type="entry name" value="PSII_PsbC_CP43"/>
    <property type="match status" value="1"/>
</dbReference>
<dbReference type="InterPro" id="IPR000932">
    <property type="entry name" value="PS_antenna-like"/>
</dbReference>
<dbReference type="InterPro" id="IPR036001">
    <property type="entry name" value="PS_II_antenna-like_sf"/>
</dbReference>
<dbReference type="InterPro" id="IPR005869">
    <property type="entry name" value="PSII_PsbC"/>
</dbReference>
<dbReference type="InterPro" id="IPR044900">
    <property type="entry name" value="PSII_PsbC_sf"/>
</dbReference>
<dbReference type="NCBIfam" id="TIGR03041">
    <property type="entry name" value="PS_antenn_a_b"/>
    <property type="match status" value="1"/>
</dbReference>
<dbReference type="NCBIfam" id="TIGR01153">
    <property type="entry name" value="psbC"/>
    <property type="match status" value="1"/>
</dbReference>
<dbReference type="Pfam" id="PF00421">
    <property type="entry name" value="PSII"/>
    <property type="match status" value="1"/>
</dbReference>
<dbReference type="SUPFAM" id="SSF161077">
    <property type="entry name" value="Photosystem II antenna protein-like"/>
    <property type="match status" value="1"/>
</dbReference>
<organism>
    <name type="scientific">Thermostichus vulcanus</name>
    <name type="common">Synechococcus vulcanus</name>
    <dbReference type="NCBI Taxonomy" id="32053"/>
    <lineage>
        <taxon>Bacteria</taxon>
        <taxon>Bacillati</taxon>
        <taxon>Cyanobacteriota</taxon>
        <taxon>Cyanophyceae</taxon>
        <taxon>Thermostichales</taxon>
        <taxon>Thermostichaceae</taxon>
        <taxon>Thermostichus</taxon>
    </lineage>
</organism>